<accession>P44452</accession>
<name>FDHE_HAEIN</name>
<organism>
    <name type="scientific">Haemophilus influenzae (strain ATCC 51907 / DSM 11121 / KW20 / Rd)</name>
    <dbReference type="NCBI Taxonomy" id="71421"/>
    <lineage>
        <taxon>Bacteria</taxon>
        <taxon>Pseudomonadati</taxon>
        <taxon>Pseudomonadota</taxon>
        <taxon>Gammaproteobacteria</taxon>
        <taxon>Pasteurellales</taxon>
        <taxon>Pasteurellaceae</taxon>
        <taxon>Haemophilus</taxon>
    </lineage>
</organism>
<dbReference type="EMBL" id="L42023">
    <property type="protein sequence ID" value="AAC21687.1"/>
    <property type="molecule type" value="Genomic_DNA"/>
</dbReference>
<dbReference type="PIR" id="C64042">
    <property type="entry name" value="C64042"/>
</dbReference>
<dbReference type="RefSeq" id="NP_438182.1">
    <property type="nucleotide sequence ID" value="NC_000907.1"/>
</dbReference>
<dbReference type="SMR" id="P44452"/>
<dbReference type="STRING" id="71421.HI_0009"/>
<dbReference type="EnsemblBacteria" id="AAC21687">
    <property type="protein sequence ID" value="AAC21687"/>
    <property type="gene ID" value="HI_0009"/>
</dbReference>
<dbReference type="KEGG" id="hin:HI_0009"/>
<dbReference type="PATRIC" id="fig|71421.8.peg.9"/>
<dbReference type="eggNOG" id="COG3058">
    <property type="taxonomic scope" value="Bacteria"/>
</dbReference>
<dbReference type="HOGENOM" id="CLU_055275_0_0_6"/>
<dbReference type="OrthoDB" id="9794151at2"/>
<dbReference type="PhylomeDB" id="P44452"/>
<dbReference type="BioCyc" id="HINF71421:G1GJ1-9-MONOMER"/>
<dbReference type="Proteomes" id="UP000000579">
    <property type="component" value="Chromosome"/>
</dbReference>
<dbReference type="GO" id="GO:0005829">
    <property type="term" value="C:cytosol"/>
    <property type="evidence" value="ECO:0000318"/>
    <property type="project" value="GO_Central"/>
</dbReference>
<dbReference type="GO" id="GO:0008199">
    <property type="term" value="F:ferric iron binding"/>
    <property type="evidence" value="ECO:0000318"/>
    <property type="project" value="GO_Central"/>
</dbReference>
<dbReference type="GO" id="GO:0051604">
    <property type="term" value="P:protein maturation"/>
    <property type="evidence" value="ECO:0000318"/>
    <property type="project" value="GO_Central"/>
</dbReference>
<dbReference type="CDD" id="cd16341">
    <property type="entry name" value="FdhE"/>
    <property type="match status" value="1"/>
</dbReference>
<dbReference type="FunFam" id="3.90.1670.10:FF:000001">
    <property type="entry name" value="Protein FdhE"/>
    <property type="match status" value="1"/>
</dbReference>
<dbReference type="Gene3D" id="3.90.1670.10">
    <property type="entry name" value="FdhE-like domain"/>
    <property type="match status" value="1"/>
</dbReference>
<dbReference type="HAMAP" id="MF_00611">
    <property type="entry name" value="FdeH"/>
    <property type="match status" value="1"/>
</dbReference>
<dbReference type="InterPro" id="IPR024064">
    <property type="entry name" value="FdhE-like_sf"/>
</dbReference>
<dbReference type="InterPro" id="IPR056796">
    <property type="entry name" value="FdhE_C"/>
</dbReference>
<dbReference type="InterPro" id="IPR056797">
    <property type="entry name" value="FdhE_central"/>
</dbReference>
<dbReference type="InterPro" id="IPR056774">
    <property type="entry name" value="FdhE_N"/>
</dbReference>
<dbReference type="InterPro" id="IPR006452">
    <property type="entry name" value="Formate_DH_accessory"/>
</dbReference>
<dbReference type="NCBIfam" id="TIGR01562">
    <property type="entry name" value="FdhE"/>
    <property type="match status" value="1"/>
</dbReference>
<dbReference type="NCBIfam" id="NF002925">
    <property type="entry name" value="PRK03564.1"/>
    <property type="match status" value="1"/>
</dbReference>
<dbReference type="PANTHER" id="PTHR37689">
    <property type="entry name" value="PROTEIN FDHE"/>
    <property type="match status" value="1"/>
</dbReference>
<dbReference type="PANTHER" id="PTHR37689:SF1">
    <property type="entry name" value="PROTEIN FDHE"/>
    <property type="match status" value="1"/>
</dbReference>
<dbReference type="Pfam" id="PF24860">
    <property type="entry name" value="FdhE_C"/>
    <property type="match status" value="1"/>
</dbReference>
<dbReference type="Pfam" id="PF24859">
    <property type="entry name" value="FdhE_central"/>
    <property type="match status" value="1"/>
</dbReference>
<dbReference type="Pfam" id="PF04216">
    <property type="entry name" value="FdhE_N"/>
    <property type="match status" value="1"/>
</dbReference>
<dbReference type="PIRSF" id="PIRSF018296">
    <property type="entry name" value="Format_dh_formtn"/>
    <property type="match status" value="1"/>
</dbReference>
<dbReference type="SUPFAM" id="SSF144020">
    <property type="entry name" value="FdhE-like"/>
    <property type="match status" value="1"/>
</dbReference>
<comment type="function">
    <text evidence="1">Necessary for formate dehydrogenase activity.</text>
</comment>
<comment type="subcellular location">
    <subcellularLocation>
        <location evidence="1">Cytoplasm</location>
    </subcellularLocation>
</comment>
<comment type="similarity">
    <text evidence="2">Belongs to the FdhE family.</text>
</comment>
<gene>
    <name type="primary">fdhE</name>
    <name type="ordered locus">HI_0009</name>
</gene>
<protein>
    <recommendedName>
        <fullName>Protein FdhE homolog</fullName>
    </recommendedName>
</protein>
<sequence length="302" mass="34224">MSIKILSESEIKQVANSYQAPAVLFANPKNLYQRRAKRLRDLAQNHPLSDYLLFAADIVESQLSTLEKNPLPPQQLEQLNTIEPLNAKTFKRNSIWREYLTEILDEIKPKANEQIAATIEFLEKASSAELEEMANKLLAQEFNLVSSDKAVFIWAALSLYWLQAAQQIPHNSQVENAENLHHCPVCGSLPVASMVQIGTSQGLRYLHCNLCESEWNLVRAQCTNCNSHDKLEMWSLNEELALVRAETCGSCESYLKMMFQEKDPYVEPVADDLASIFLDIEMEEKGFARSGLNPFIFPAEEA</sequence>
<feature type="chain" id="PRO_0000189642" description="Protein FdhE homolog">
    <location>
        <begin position="1"/>
        <end position="302"/>
    </location>
</feature>
<keyword id="KW-0963">Cytoplasm</keyword>
<keyword id="KW-1185">Reference proteome</keyword>
<proteinExistence type="inferred from homology"/>
<reference key="1">
    <citation type="journal article" date="1995" name="Science">
        <title>Whole-genome random sequencing and assembly of Haemophilus influenzae Rd.</title>
        <authorList>
            <person name="Fleischmann R.D."/>
            <person name="Adams M.D."/>
            <person name="White O."/>
            <person name="Clayton R.A."/>
            <person name="Kirkness E.F."/>
            <person name="Kerlavage A.R."/>
            <person name="Bult C.J."/>
            <person name="Tomb J.-F."/>
            <person name="Dougherty B.A."/>
            <person name="Merrick J.M."/>
            <person name="McKenney K."/>
            <person name="Sutton G.G."/>
            <person name="FitzHugh W."/>
            <person name="Fields C.A."/>
            <person name="Gocayne J.D."/>
            <person name="Scott J.D."/>
            <person name="Shirley R."/>
            <person name="Liu L.-I."/>
            <person name="Glodek A."/>
            <person name="Kelley J.M."/>
            <person name="Weidman J.F."/>
            <person name="Phillips C.A."/>
            <person name="Spriggs T."/>
            <person name="Hedblom E."/>
            <person name="Cotton M.D."/>
            <person name="Utterback T.R."/>
            <person name="Hanna M.C."/>
            <person name="Nguyen D.T."/>
            <person name="Saudek D.M."/>
            <person name="Brandon R.C."/>
            <person name="Fine L.D."/>
            <person name="Fritchman J.L."/>
            <person name="Fuhrmann J.L."/>
            <person name="Geoghagen N.S.M."/>
            <person name="Gnehm C.L."/>
            <person name="McDonald L.A."/>
            <person name="Small K.V."/>
            <person name="Fraser C.M."/>
            <person name="Smith H.O."/>
            <person name="Venter J.C."/>
        </authorList>
    </citation>
    <scope>NUCLEOTIDE SEQUENCE [LARGE SCALE GENOMIC DNA]</scope>
    <source>
        <strain>ATCC 51907 / DSM 11121 / KW20 / Rd</strain>
    </source>
</reference>
<evidence type="ECO:0000250" key="1"/>
<evidence type="ECO:0000305" key="2"/>